<organism>
    <name type="scientific">Oryctolagus cuniculus</name>
    <name type="common">Rabbit</name>
    <dbReference type="NCBI Taxonomy" id="9986"/>
    <lineage>
        <taxon>Eukaryota</taxon>
        <taxon>Metazoa</taxon>
        <taxon>Chordata</taxon>
        <taxon>Craniata</taxon>
        <taxon>Vertebrata</taxon>
        <taxon>Euteleostomi</taxon>
        <taxon>Mammalia</taxon>
        <taxon>Eutheria</taxon>
        <taxon>Euarchontoglires</taxon>
        <taxon>Glires</taxon>
        <taxon>Lagomorpha</taxon>
        <taxon>Leporidae</taxon>
        <taxon>Oryctolagus</taxon>
    </lineage>
</organism>
<proteinExistence type="evidence at protein level"/>
<sequence>MFSASCSVTVVVLLITVRRTNGASVTQTEGPVILSEGSSLTLNCNYQTSYSGFLFWYVQYLHEGPQLLLQSTTENQRMEHQGFHATFVKKDSSFHLHKSSLQLSDSAVYYCALRRGASNKLTLGTGTLLKVELN</sequence>
<evidence type="ECO:0000305" key="1">
    <source>
    </source>
</evidence>
<comment type="PTM">
    <text evidence="1">Rearrangement with the C region would elongate the sequence with Ile-Thr-; which creates a potential N-glycosylation site at Asn-134.</text>
</comment>
<comment type="miscellaneous">
    <text>The gene corresponding to this mRNA is rearranged specifically in T-cells; its organization is similar to an Ig gene, with V, D, J, and C regions.</text>
</comment>
<keyword id="KW-1064">Adaptive immunity</keyword>
<keyword id="KW-0325">Glycoprotein</keyword>
<keyword id="KW-0391">Immunity</keyword>
<keyword id="KW-0393">Immunoglobulin domain</keyword>
<keyword id="KW-0675">Receptor</keyword>
<keyword id="KW-1185">Reference proteome</keyword>
<keyword id="KW-0732">Signal</keyword>
<keyword id="KW-1279">T cell receptor</keyword>
<feature type="signal peptide">
    <location>
        <begin position="1"/>
        <end position="20"/>
    </location>
</feature>
<feature type="chain" id="PRO_0000033592" description="T-cell receptor alpha chain V region RL-5">
    <location>
        <begin position="21"/>
        <end position="134"/>
    </location>
</feature>
<feature type="region of interest" description="V segment">
    <location>
        <begin position="21"/>
        <end position="114"/>
    </location>
</feature>
<feature type="region of interest" description="J segment">
    <location>
        <begin position="115"/>
        <end position="134"/>
    </location>
</feature>
<feature type="glycosylation site" description="N-linked (GlcNAc...) asparagine" evidence="1">
    <location>
        <position position="134"/>
    </location>
</feature>
<feature type="non-terminal residue">
    <location>
        <position position="134"/>
    </location>
</feature>
<name>TVA1_RABIT</name>
<dbReference type="EMBL" id="M12885">
    <property type="protein sequence ID" value="AAA31469.1"/>
    <property type="molecule type" value="mRNA"/>
</dbReference>
<dbReference type="PIR" id="A02013">
    <property type="entry name" value="RWRBAV"/>
</dbReference>
<dbReference type="SMR" id="P06322"/>
<dbReference type="FunCoup" id="P06322">
    <property type="interactions" value="47"/>
</dbReference>
<dbReference type="STRING" id="9986.ENSOCUP00000021069"/>
<dbReference type="iPTMnet" id="P06322"/>
<dbReference type="PaxDb" id="9986-ENSOCUP00000021732"/>
<dbReference type="eggNOG" id="ENOG502S6PI">
    <property type="taxonomic scope" value="Eukaryota"/>
</dbReference>
<dbReference type="InParanoid" id="P06322"/>
<dbReference type="Proteomes" id="UP000001811">
    <property type="component" value="Unplaced"/>
</dbReference>
<dbReference type="GO" id="GO:0042101">
    <property type="term" value="C:T cell receptor complex"/>
    <property type="evidence" value="ECO:0007669"/>
    <property type="project" value="UniProtKB-KW"/>
</dbReference>
<dbReference type="GO" id="GO:0002250">
    <property type="term" value="P:adaptive immune response"/>
    <property type="evidence" value="ECO:0007669"/>
    <property type="project" value="UniProtKB-KW"/>
</dbReference>
<dbReference type="CDD" id="cd04983">
    <property type="entry name" value="IgV_TCR_alpha"/>
    <property type="match status" value="1"/>
</dbReference>
<dbReference type="Gene3D" id="2.60.40.10">
    <property type="entry name" value="Immunoglobulins"/>
    <property type="match status" value="1"/>
</dbReference>
<dbReference type="InterPro" id="IPR007110">
    <property type="entry name" value="Ig-like_dom"/>
</dbReference>
<dbReference type="InterPro" id="IPR036179">
    <property type="entry name" value="Ig-like_dom_sf"/>
</dbReference>
<dbReference type="InterPro" id="IPR013783">
    <property type="entry name" value="Ig-like_fold"/>
</dbReference>
<dbReference type="InterPro" id="IPR003599">
    <property type="entry name" value="Ig_sub"/>
</dbReference>
<dbReference type="InterPro" id="IPR013106">
    <property type="entry name" value="Ig_V-set"/>
</dbReference>
<dbReference type="InterPro" id="IPR051287">
    <property type="entry name" value="TCR_variable_region"/>
</dbReference>
<dbReference type="PANTHER" id="PTHR19367:SF42">
    <property type="entry name" value="T CELL RECEPTOR ALPHA VARIABLE 18"/>
    <property type="match status" value="1"/>
</dbReference>
<dbReference type="PANTHER" id="PTHR19367">
    <property type="entry name" value="T-CELL RECEPTOR ALPHA CHAIN V REGION"/>
    <property type="match status" value="1"/>
</dbReference>
<dbReference type="Pfam" id="PF07686">
    <property type="entry name" value="V-set"/>
    <property type="match status" value="1"/>
</dbReference>
<dbReference type="SMART" id="SM00409">
    <property type="entry name" value="IG"/>
    <property type="match status" value="1"/>
</dbReference>
<dbReference type="SMART" id="SM00406">
    <property type="entry name" value="IGv"/>
    <property type="match status" value="1"/>
</dbReference>
<dbReference type="SUPFAM" id="SSF48726">
    <property type="entry name" value="Immunoglobulin"/>
    <property type="match status" value="1"/>
</dbReference>
<dbReference type="PROSITE" id="PS50835">
    <property type="entry name" value="IG_LIKE"/>
    <property type="match status" value="1"/>
</dbReference>
<reference key="1">
    <citation type="journal article" date="1986" name="Proc. Natl. Acad. Sci. U.S.A.">
        <title>Two distinct T-cell receptor alpha-chain transcripts in a rabbit T-cell line: implications for allelic exclusion in T cells.</title>
        <authorList>
            <person name="Marche P.N."/>
            <person name="Kindt T.J."/>
        </authorList>
    </citation>
    <scope>NUCLEOTIDE SEQUENCE [MRNA]</scope>
    <scope>GLYCOSYLATION AT ASN-134</scope>
</reference>
<protein>
    <recommendedName>
        <fullName>T-cell receptor alpha chain V region RL-5</fullName>
    </recommendedName>
</protein>
<accession>P06322</accession>